<dbReference type="EC" id="1.1.1.267" evidence="1"/>
<dbReference type="EMBL" id="AB049187">
    <property type="protein sequence ID" value="BAB39759.1"/>
    <property type="molecule type" value="Genomic_DNA"/>
</dbReference>
<dbReference type="SMR" id="Q9AJD7"/>
<dbReference type="STRING" id="2064.TR51_07850"/>
<dbReference type="UniPathway" id="UPA00056">
    <property type="reaction ID" value="UER00092"/>
</dbReference>
<dbReference type="GO" id="GO:0030604">
    <property type="term" value="F:1-deoxy-D-xylulose-5-phosphate reductoisomerase activity"/>
    <property type="evidence" value="ECO:0007669"/>
    <property type="project" value="UniProtKB-UniRule"/>
</dbReference>
<dbReference type="GO" id="GO:0030145">
    <property type="term" value="F:manganese ion binding"/>
    <property type="evidence" value="ECO:0007669"/>
    <property type="project" value="TreeGrafter"/>
</dbReference>
<dbReference type="GO" id="GO:0070402">
    <property type="term" value="F:NADPH binding"/>
    <property type="evidence" value="ECO:0007669"/>
    <property type="project" value="InterPro"/>
</dbReference>
<dbReference type="GO" id="GO:0051484">
    <property type="term" value="P:isopentenyl diphosphate biosynthetic process, methylerythritol 4-phosphate pathway involved in terpenoid biosynthetic process"/>
    <property type="evidence" value="ECO:0007669"/>
    <property type="project" value="TreeGrafter"/>
</dbReference>
<dbReference type="FunFam" id="3.40.50.720:FF:000045">
    <property type="entry name" value="1-deoxy-D-xylulose 5-phosphate reductoisomerase"/>
    <property type="match status" value="1"/>
</dbReference>
<dbReference type="Gene3D" id="1.10.1740.10">
    <property type="match status" value="1"/>
</dbReference>
<dbReference type="Gene3D" id="3.40.50.720">
    <property type="entry name" value="NAD(P)-binding Rossmann-like Domain"/>
    <property type="match status" value="1"/>
</dbReference>
<dbReference type="HAMAP" id="MF_00183">
    <property type="entry name" value="DXP_reductoisom"/>
    <property type="match status" value="1"/>
</dbReference>
<dbReference type="InterPro" id="IPR003821">
    <property type="entry name" value="DXP_reductoisomerase"/>
</dbReference>
<dbReference type="InterPro" id="IPR013644">
    <property type="entry name" value="DXP_reductoisomerase_C"/>
</dbReference>
<dbReference type="InterPro" id="IPR013512">
    <property type="entry name" value="DXP_reductoisomerase_N"/>
</dbReference>
<dbReference type="InterPro" id="IPR026877">
    <property type="entry name" value="DXPR_C"/>
</dbReference>
<dbReference type="InterPro" id="IPR036169">
    <property type="entry name" value="DXPR_C_sf"/>
</dbReference>
<dbReference type="InterPro" id="IPR036291">
    <property type="entry name" value="NAD(P)-bd_dom_sf"/>
</dbReference>
<dbReference type="NCBIfam" id="TIGR00243">
    <property type="entry name" value="Dxr"/>
    <property type="match status" value="1"/>
</dbReference>
<dbReference type="PANTHER" id="PTHR30525">
    <property type="entry name" value="1-DEOXY-D-XYLULOSE 5-PHOSPHATE REDUCTOISOMERASE"/>
    <property type="match status" value="1"/>
</dbReference>
<dbReference type="PANTHER" id="PTHR30525:SF0">
    <property type="entry name" value="1-DEOXY-D-XYLULOSE 5-PHOSPHATE REDUCTOISOMERASE, CHLOROPLASTIC"/>
    <property type="match status" value="1"/>
</dbReference>
<dbReference type="Pfam" id="PF08436">
    <property type="entry name" value="DXP_redisom_C"/>
    <property type="match status" value="1"/>
</dbReference>
<dbReference type="Pfam" id="PF02670">
    <property type="entry name" value="DXP_reductoisom"/>
    <property type="match status" value="1"/>
</dbReference>
<dbReference type="Pfam" id="PF13288">
    <property type="entry name" value="DXPR_C"/>
    <property type="match status" value="1"/>
</dbReference>
<dbReference type="PIRSF" id="PIRSF006205">
    <property type="entry name" value="Dxp_reductismrs"/>
    <property type="match status" value="1"/>
</dbReference>
<dbReference type="SUPFAM" id="SSF69055">
    <property type="entry name" value="1-deoxy-D-xylulose-5-phosphate reductoisomerase, C-terminal domain"/>
    <property type="match status" value="1"/>
</dbReference>
<dbReference type="SUPFAM" id="SSF55347">
    <property type="entry name" value="Glyceraldehyde-3-phosphate dehydrogenase-like, C-terminal domain"/>
    <property type="match status" value="1"/>
</dbReference>
<dbReference type="SUPFAM" id="SSF51735">
    <property type="entry name" value="NAD(P)-binding Rossmann-fold domains"/>
    <property type="match status" value="1"/>
</dbReference>
<gene>
    <name evidence="1" type="primary">dxr</name>
</gene>
<sequence>MVILGSTGSIGTQAIDVVLRNPGRFKVVALSAAGGAVELLAEQAVALGVHTVAVADPAAEEAAARGPGGQGAGRPLPRVLAGPDAATELAAAECHSVLNGITGSIGLAPTLAALRAGRVLVLANKESLIVGGPLVKAVAQPGQIVPVDSEHAALFQALAGGARAEVRKLVVTASGGPFRNRTREQLAAVTPADALAHPTWAMGPVVTINSATLVNKGLEVIEAHLLYDVPFDRIEVVVHPQSVVHSMVEFVDGSTMAQASPPDMRMPIALGLGWPDRVPDAAPGCDWTKAATWEFFPLDNEAFPAVELAREVGTLGGTAPAVFNAANEECVDAFLKGALPFTGIVDTVAKVVAEHGTPQSGTSLTVEDVLHAESWARARARELAAG</sequence>
<name>DXR_KITGR</name>
<keyword id="KW-0414">Isoprene biosynthesis</keyword>
<keyword id="KW-0464">Manganese</keyword>
<keyword id="KW-0479">Metal-binding</keyword>
<keyword id="KW-0521">NADP</keyword>
<keyword id="KW-0560">Oxidoreductase</keyword>
<reference key="1">
    <citation type="journal article" date="2002" name="Biosci. Biotechnol. Biochem.">
        <title>Growth-phase dependent expression of the mevalonate pathway in a terpenoid antibiotic-producing Streptomyces strain.</title>
        <authorList>
            <person name="Hamano Y."/>
            <person name="Dairi T."/>
            <person name="Yamamoto M."/>
            <person name="Kuzuyama T."/>
            <person name="Itoh N."/>
            <person name="Seto H."/>
        </authorList>
    </citation>
    <scope>NUCLEOTIDE SEQUENCE [GENOMIC DNA]</scope>
    <source>
        <strain>MF730-N6</strain>
    </source>
</reference>
<proteinExistence type="inferred from homology"/>
<feature type="chain" id="PRO_0000163666" description="1-deoxy-D-xylulose 5-phosphate reductoisomerase">
    <location>
        <begin position="1"/>
        <end position="386"/>
    </location>
</feature>
<feature type="binding site" evidence="1">
    <location>
        <position position="7"/>
    </location>
    <ligand>
        <name>NADPH</name>
        <dbReference type="ChEBI" id="CHEBI:57783"/>
    </ligand>
</feature>
<feature type="binding site" evidence="1">
    <location>
        <position position="8"/>
    </location>
    <ligand>
        <name>NADPH</name>
        <dbReference type="ChEBI" id="CHEBI:57783"/>
    </ligand>
</feature>
<feature type="binding site" evidence="1">
    <location>
        <position position="9"/>
    </location>
    <ligand>
        <name>NADPH</name>
        <dbReference type="ChEBI" id="CHEBI:57783"/>
    </ligand>
</feature>
<feature type="binding site" evidence="1">
    <location>
        <position position="10"/>
    </location>
    <ligand>
        <name>NADPH</name>
        <dbReference type="ChEBI" id="CHEBI:57783"/>
    </ligand>
</feature>
<feature type="binding site" evidence="1">
    <location>
        <position position="33"/>
    </location>
    <ligand>
        <name>NADPH</name>
        <dbReference type="ChEBI" id="CHEBI:57783"/>
    </ligand>
</feature>
<feature type="binding site" evidence="1">
    <location>
        <position position="124"/>
    </location>
    <ligand>
        <name>NADPH</name>
        <dbReference type="ChEBI" id="CHEBI:57783"/>
    </ligand>
</feature>
<feature type="binding site" evidence="1">
    <location>
        <position position="125"/>
    </location>
    <ligand>
        <name>1-deoxy-D-xylulose 5-phosphate</name>
        <dbReference type="ChEBI" id="CHEBI:57792"/>
    </ligand>
</feature>
<feature type="binding site" evidence="1">
    <location>
        <position position="126"/>
    </location>
    <ligand>
        <name>NADPH</name>
        <dbReference type="ChEBI" id="CHEBI:57783"/>
    </ligand>
</feature>
<feature type="binding site" evidence="1">
    <location>
        <position position="148"/>
    </location>
    <ligand>
        <name>Mn(2+)</name>
        <dbReference type="ChEBI" id="CHEBI:29035"/>
    </ligand>
</feature>
<feature type="binding site" evidence="1">
    <location>
        <position position="149"/>
    </location>
    <ligand>
        <name>1-deoxy-D-xylulose 5-phosphate</name>
        <dbReference type="ChEBI" id="CHEBI:57792"/>
    </ligand>
</feature>
<feature type="binding site" evidence="1">
    <location>
        <position position="150"/>
    </location>
    <ligand>
        <name>1-deoxy-D-xylulose 5-phosphate</name>
        <dbReference type="ChEBI" id="CHEBI:57792"/>
    </ligand>
</feature>
<feature type="binding site" evidence="1">
    <location>
        <position position="150"/>
    </location>
    <ligand>
        <name>Mn(2+)</name>
        <dbReference type="ChEBI" id="CHEBI:29035"/>
    </ligand>
</feature>
<feature type="binding site" evidence="1">
    <location>
        <position position="174"/>
    </location>
    <ligand>
        <name>1-deoxy-D-xylulose 5-phosphate</name>
        <dbReference type="ChEBI" id="CHEBI:57792"/>
    </ligand>
</feature>
<feature type="binding site" evidence="1">
    <location>
        <position position="197"/>
    </location>
    <ligand>
        <name>1-deoxy-D-xylulose 5-phosphate</name>
        <dbReference type="ChEBI" id="CHEBI:57792"/>
    </ligand>
</feature>
<feature type="binding site" evidence="1">
    <location>
        <position position="203"/>
    </location>
    <ligand>
        <name>NADPH</name>
        <dbReference type="ChEBI" id="CHEBI:57783"/>
    </ligand>
</feature>
<feature type="binding site" evidence="1">
    <location>
        <position position="210"/>
    </location>
    <ligand>
        <name>1-deoxy-D-xylulose 5-phosphate</name>
        <dbReference type="ChEBI" id="CHEBI:57792"/>
    </ligand>
</feature>
<feature type="binding site" evidence="1">
    <location>
        <position position="215"/>
    </location>
    <ligand>
        <name>1-deoxy-D-xylulose 5-phosphate</name>
        <dbReference type="ChEBI" id="CHEBI:57792"/>
    </ligand>
</feature>
<feature type="binding site" evidence="1">
    <location>
        <position position="216"/>
    </location>
    <ligand>
        <name>1-deoxy-D-xylulose 5-phosphate</name>
        <dbReference type="ChEBI" id="CHEBI:57792"/>
    </ligand>
</feature>
<feature type="binding site" evidence="1">
    <location>
        <position position="219"/>
    </location>
    <ligand>
        <name>1-deoxy-D-xylulose 5-phosphate</name>
        <dbReference type="ChEBI" id="CHEBI:57792"/>
    </ligand>
</feature>
<feature type="binding site" evidence="1">
    <location>
        <position position="219"/>
    </location>
    <ligand>
        <name>Mn(2+)</name>
        <dbReference type="ChEBI" id="CHEBI:29035"/>
    </ligand>
</feature>
<organism>
    <name type="scientific">Kitasatospora griseola</name>
    <name type="common">Streptomyces griseolosporeus</name>
    <dbReference type="NCBI Taxonomy" id="2064"/>
    <lineage>
        <taxon>Bacteria</taxon>
        <taxon>Bacillati</taxon>
        <taxon>Actinomycetota</taxon>
        <taxon>Actinomycetes</taxon>
        <taxon>Kitasatosporales</taxon>
        <taxon>Streptomycetaceae</taxon>
        <taxon>Kitasatospora</taxon>
    </lineage>
</organism>
<accession>Q9AJD7</accession>
<comment type="function">
    <text evidence="1">Catalyzes the NADPH-dependent rearrangement and reduction of 1-deoxy-D-xylulose-5-phosphate (DXP) to 2-C-methyl-D-erythritol 4-phosphate (MEP).</text>
</comment>
<comment type="catalytic activity">
    <reaction evidence="1">
        <text>2-C-methyl-D-erythritol 4-phosphate + NADP(+) = 1-deoxy-D-xylulose 5-phosphate + NADPH + H(+)</text>
        <dbReference type="Rhea" id="RHEA:13717"/>
        <dbReference type="ChEBI" id="CHEBI:15378"/>
        <dbReference type="ChEBI" id="CHEBI:57783"/>
        <dbReference type="ChEBI" id="CHEBI:57792"/>
        <dbReference type="ChEBI" id="CHEBI:58262"/>
        <dbReference type="ChEBI" id="CHEBI:58349"/>
        <dbReference type="EC" id="1.1.1.267"/>
    </reaction>
    <physiologicalReaction direction="right-to-left" evidence="1">
        <dbReference type="Rhea" id="RHEA:13719"/>
    </physiologicalReaction>
</comment>
<comment type="cofactor">
    <cofactor evidence="1">
        <name>Mg(2+)</name>
        <dbReference type="ChEBI" id="CHEBI:18420"/>
    </cofactor>
    <cofactor evidence="1">
        <name>Mn(2+)</name>
        <dbReference type="ChEBI" id="CHEBI:29035"/>
    </cofactor>
</comment>
<comment type="pathway">
    <text evidence="1">Isoprenoid biosynthesis; isopentenyl diphosphate biosynthesis via DXP pathway; isopentenyl diphosphate from 1-deoxy-D-xylulose 5-phosphate: step 1/6.</text>
</comment>
<comment type="similarity">
    <text evidence="1">Belongs to the DXR family.</text>
</comment>
<evidence type="ECO:0000255" key="1">
    <source>
        <dbReference type="HAMAP-Rule" id="MF_00183"/>
    </source>
</evidence>
<protein>
    <recommendedName>
        <fullName evidence="1">1-deoxy-D-xylulose 5-phosphate reductoisomerase</fullName>
        <shortName evidence="1">DXP reductoisomerase</shortName>
        <ecNumber evidence="1">1.1.1.267</ecNumber>
    </recommendedName>
    <alternativeName>
        <fullName evidence="1">1-deoxyxylulose-5-phosphate reductoisomerase</fullName>
    </alternativeName>
    <alternativeName>
        <fullName evidence="1">2-C-methyl-D-erythritol 4-phosphate synthase</fullName>
    </alternativeName>
</protein>